<reference key="1">
    <citation type="journal article" date="2004" name="Nat. Genet.">
        <title>Complete sequencing and characterization of 21,243 full-length human cDNAs.</title>
        <authorList>
            <person name="Ota T."/>
            <person name="Suzuki Y."/>
            <person name="Nishikawa T."/>
            <person name="Otsuki T."/>
            <person name="Sugiyama T."/>
            <person name="Irie R."/>
            <person name="Wakamatsu A."/>
            <person name="Hayashi K."/>
            <person name="Sato H."/>
            <person name="Nagai K."/>
            <person name="Kimura K."/>
            <person name="Makita H."/>
            <person name="Sekine M."/>
            <person name="Obayashi M."/>
            <person name="Nishi T."/>
            <person name="Shibahara T."/>
            <person name="Tanaka T."/>
            <person name="Ishii S."/>
            <person name="Yamamoto J."/>
            <person name="Saito K."/>
            <person name="Kawai Y."/>
            <person name="Isono Y."/>
            <person name="Nakamura Y."/>
            <person name="Nagahari K."/>
            <person name="Murakami K."/>
            <person name="Yasuda T."/>
            <person name="Iwayanagi T."/>
            <person name="Wagatsuma M."/>
            <person name="Shiratori A."/>
            <person name="Sudo H."/>
            <person name="Hosoiri T."/>
            <person name="Kaku Y."/>
            <person name="Kodaira H."/>
            <person name="Kondo H."/>
            <person name="Sugawara M."/>
            <person name="Takahashi M."/>
            <person name="Kanda K."/>
            <person name="Yokoi T."/>
            <person name="Furuya T."/>
            <person name="Kikkawa E."/>
            <person name="Omura Y."/>
            <person name="Abe K."/>
            <person name="Kamihara K."/>
            <person name="Katsuta N."/>
            <person name="Sato K."/>
            <person name="Tanikawa M."/>
            <person name="Yamazaki M."/>
            <person name="Ninomiya K."/>
            <person name="Ishibashi T."/>
            <person name="Yamashita H."/>
            <person name="Murakawa K."/>
            <person name="Fujimori K."/>
            <person name="Tanai H."/>
            <person name="Kimata M."/>
            <person name="Watanabe M."/>
            <person name="Hiraoka S."/>
            <person name="Chiba Y."/>
            <person name="Ishida S."/>
            <person name="Ono Y."/>
            <person name="Takiguchi S."/>
            <person name="Watanabe S."/>
            <person name="Yosida M."/>
            <person name="Hotuta T."/>
            <person name="Kusano J."/>
            <person name="Kanehori K."/>
            <person name="Takahashi-Fujii A."/>
            <person name="Hara H."/>
            <person name="Tanase T.-O."/>
            <person name="Nomura Y."/>
            <person name="Togiya S."/>
            <person name="Komai F."/>
            <person name="Hara R."/>
            <person name="Takeuchi K."/>
            <person name="Arita M."/>
            <person name="Imose N."/>
            <person name="Musashino K."/>
            <person name="Yuuki H."/>
            <person name="Oshima A."/>
            <person name="Sasaki N."/>
            <person name="Aotsuka S."/>
            <person name="Yoshikawa Y."/>
            <person name="Matsunawa H."/>
            <person name="Ichihara T."/>
            <person name="Shiohata N."/>
            <person name="Sano S."/>
            <person name="Moriya S."/>
            <person name="Momiyama H."/>
            <person name="Satoh N."/>
            <person name="Takami S."/>
            <person name="Terashima Y."/>
            <person name="Suzuki O."/>
            <person name="Nakagawa S."/>
            <person name="Senoh A."/>
            <person name="Mizoguchi H."/>
            <person name="Goto Y."/>
            <person name="Shimizu F."/>
            <person name="Wakebe H."/>
            <person name="Hishigaki H."/>
            <person name="Watanabe T."/>
            <person name="Sugiyama A."/>
            <person name="Takemoto M."/>
            <person name="Kawakami B."/>
            <person name="Yamazaki M."/>
            <person name="Watanabe K."/>
            <person name="Kumagai A."/>
            <person name="Itakura S."/>
            <person name="Fukuzumi Y."/>
            <person name="Fujimori Y."/>
            <person name="Komiyama M."/>
            <person name="Tashiro H."/>
            <person name="Tanigami A."/>
            <person name="Fujiwara T."/>
            <person name="Ono T."/>
            <person name="Yamada K."/>
            <person name="Fujii Y."/>
            <person name="Ozaki K."/>
            <person name="Hirao M."/>
            <person name="Ohmori Y."/>
            <person name="Kawabata A."/>
            <person name="Hikiji T."/>
            <person name="Kobatake N."/>
            <person name="Inagaki H."/>
            <person name="Ikema Y."/>
            <person name="Okamoto S."/>
            <person name="Okitani R."/>
            <person name="Kawakami T."/>
            <person name="Noguchi S."/>
            <person name="Itoh T."/>
            <person name="Shigeta K."/>
            <person name="Senba T."/>
            <person name="Matsumura K."/>
            <person name="Nakajima Y."/>
            <person name="Mizuno T."/>
            <person name="Morinaga M."/>
            <person name="Sasaki M."/>
            <person name="Togashi T."/>
            <person name="Oyama M."/>
            <person name="Hata H."/>
            <person name="Watanabe M."/>
            <person name="Komatsu T."/>
            <person name="Mizushima-Sugano J."/>
            <person name="Satoh T."/>
            <person name="Shirai Y."/>
            <person name="Takahashi Y."/>
            <person name="Nakagawa K."/>
            <person name="Okumura K."/>
            <person name="Nagase T."/>
            <person name="Nomura N."/>
            <person name="Kikuchi H."/>
            <person name="Masuho Y."/>
            <person name="Yamashita R."/>
            <person name="Nakai K."/>
            <person name="Yada T."/>
            <person name="Nakamura Y."/>
            <person name="Ohara O."/>
            <person name="Isogai T."/>
            <person name="Sugano S."/>
        </authorList>
    </citation>
    <scope>NUCLEOTIDE SEQUENCE [LARGE SCALE MRNA]</scope>
    <source>
        <tissue>Signet-ring cell carcinoma</tissue>
        <tissue>Trachea</tissue>
    </source>
</reference>
<reference key="2">
    <citation type="submission" date="2005-07" db="EMBL/GenBank/DDBJ databases">
        <authorList>
            <person name="Mural R.J."/>
            <person name="Istrail S."/>
            <person name="Sutton G.G."/>
            <person name="Florea L."/>
            <person name="Halpern A.L."/>
            <person name="Mobarry C.M."/>
            <person name="Lippert R."/>
            <person name="Walenz B."/>
            <person name="Shatkay H."/>
            <person name="Dew I."/>
            <person name="Miller J.R."/>
            <person name="Flanigan M.J."/>
            <person name="Edwards N.J."/>
            <person name="Bolanos R."/>
            <person name="Fasulo D."/>
            <person name="Halldorsson B.V."/>
            <person name="Hannenhalli S."/>
            <person name="Turner R."/>
            <person name="Yooseph S."/>
            <person name="Lu F."/>
            <person name="Nusskern D.R."/>
            <person name="Shue B.C."/>
            <person name="Zheng X.H."/>
            <person name="Zhong F."/>
            <person name="Delcher A.L."/>
            <person name="Huson D.H."/>
            <person name="Kravitz S.A."/>
            <person name="Mouchard L."/>
            <person name="Reinert K."/>
            <person name="Remington K.A."/>
            <person name="Clark A.G."/>
            <person name="Waterman M.S."/>
            <person name="Eichler E.E."/>
            <person name="Adams M.D."/>
            <person name="Hunkapiller M.W."/>
            <person name="Myers E.W."/>
            <person name="Venter J.C."/>
        </authorList>
    </citation>
    <scope>NUCLEOTIDE SEQUENCE [LARGE SCALE GENOMIC DNA]</scope>
</reference>
<reference key="3">
    <citation type="journal article" date="2004" name="Genome Res.">
        <title>The status, quality, and expansion of the NIH full-length cDNA project: the Mammalian Gene Collection (MGC).</title>
        <authorList>
            <consortium name="The MGC Project Team"/>
        </authorList>
    </citation>
    <scope>NUCLEOTIDE SEQUENCE [LARGE SCALE MRNA]</scope>
    <scope>VARIANTS VAL-18 AND GLY-390</scope>
    <source>
        <tissue>Colon</tissue>
    </source>
</reference>
<reference key="4">
    <citation type="journal article" date="2016" name="J. Biol. Chem.">
        <title>Transmembrane protein 184A is a receptor required for vascular smooth muscle cell responses to heparin.</title>
        <authorList>
            <person name="Pugh R.J."/>
            <person name="Slee J.B."/>
            <person name="Farwell S.L."/>
            <person name="Li Y."/>
            <person name="Barthol T."/>
            <person name="Patton W.A."/>
            <person name="Lowe-Krentz L.J."/>
        </authorList>
    </citation>
    <scope>IDENTIFICATION BY MASS SPECTROMETRY</scope>
    <scope>TISSUE SPECIFICITY</scope>
</reference>
<feature type="chain" id="PRO_0000300466" description="Transmembrane protein 184A">
    <location>
        <begin position="1"/>
        <end position="413"/>
    </location>
</feature>
<feature type="transmembrane region" description="Helical" evidence="4">
    <location>
        <begin position="47"/>
        <end position="69"/>
    </location>
</feature>
<feature type="transmembrane region" description="Helical" evidence="4">
    <location>
        <begin position="93"/>
        <end position="113"/>
    </location>
</feature>
<feature type="transmembrane region" description="Helical" evidence="4">
    <location>
        <begin position="130"/>
        <end position="150"/>
    </location>
</feature>
<feature type="transmembrane region" description="Helical" evidence="4">
    <location>
        <begin position="187"/>
        <end position="207"/>
    </location>
</feature>
<feature type="transmembrane region" description="Helical" evidence="4">
    <location>
        <begin position="223"/>
        <end position="243"/>
    </location>
</feature>
<feature type="transmembrane region" description="Helical" evidence="4">
    <location>
        <begin position="258"/>
        <end position="278"/>
    </location>
</feature>
<feature type="transmembrane region" description="Helical" evidence="4">
    <location>
        <begin position="300"/>
        <end position="320"/>
    </location>
</feature>
<feature type="region of interest" description="Disordered" evidence="5">
    <location>
        <begin position="372"/>
        <end position="413"/>
    </location>
</feature>
<feature type="sequence variant" id="VAR_062157" description="In dbSNP:rs17852421." evidence="6">
    <original>A</original>
    <variation>V</variation>
    <location>
        <position position="18"/>
    </location>
</feature>
<feature type="sequence variant" id="VAR_060120" description="In dbSNP:rs3779607." evidence="6">
    <original>S</original>
    <variation>G</variation>
    <location>
        <position position="390"/>
    </location>
</feature>
<feature type="sequence conflict" description="In Ref. 3; AAH26694." evidence="8" ref="3">
    <original>G</original>
    <variation>GG</variation>
    <location>
        <position position="391"/>
    </location>
</feature>
<proteinExistence type="evidence at protein level"/>
<sequence>MSNVSGILETAGVPLVSANWPQPSPPPAVPAGPQMDHMGNSSQGAPWLFLTSALARGVSGIFVWTALVLTCHQIYLHLRSYTVPQEQRYIIRLLLIVPIYAFDSWLSLLLLGDHQYYVYFDSVRDCYEAFVIYSFLSLCFQYLGGEGAIMAEIRGKPIKSSCLYGTCCLRGMTYSIGFLRFCKQATLQFCLVKPVMAVTTIILQAFGKYHDGDFNVRSGYLYVTLIYNASVSLALYALFLFYFTTRELLRPFQPVLKFLTIKAVIFLSFWQGLLLAILERCGVIPEVETSGGNKLGAGTLAAGYQNFIICVEMLFASVALRYAFPCQVYAEKKENSPAPPAPMQSISSGIRETVSPQDIVQDAIHNFSPAYQHYTQQATHEAPRPGTHPSGGSGGSRKSRSLEKRMLIPSEDL</sequence>
<keyword id="KW-1003">Cell membrane</keyword>
<keyword id="KW-0963">Cytoplasm</keyword>
<keyword id="KW-0968">Cytoplasmic vesicle</keyword>
<keyword id="KW-0967">Endosome</keyword>
<keyword id="KW-0472">Membrane</keyword>
<keyword id="KW-1267">Proteomics identification</keyword>
<keyword id="KW-1185">Reference proteome</keyword>
<keyword id="KW-0812">Transmembrane</keyword>
<keyword id="KW-1133">Transmembrane helix</keyword>
<comment type="function">
    <text evidence="2 3">Acts as a heparin receptor in vascular cells (By similarity). May be involved in vesicle transport in exocrine cells and Sertoli cells (By similarity).</text>
</comment>
<comment type="subcellular location">
    <subcellularLocation>
        <location evidence="3">Cell membrane</location>
        <topology evidence="4">Multi-pass membrane protein</topology>
    </subcellularLocation>
    <subcellularLocation>
        <location evidence="3">Cytoplasm</location>
        <location evidence="3">Perinuclear region</location>
    </subcellularLocation>
    <subcellularLocation>
        <location evidence="1">Cytoplasmic vesicle membrane</location>
        <topology evidence="4">Multi-pass membrane protein</topology>
    </subcellularLocation>
    <subcellularLocation>
        <location evidence="2">Early endosome membrane</location>
        <topology evidence="4">Multi-pass membrane protein</topology>
    </subcellularLocation>
    <subcellularLocation>
        <location evidence="2">Endosome</location>
    </subcellularLocation>
    <subcellularLocation>
        <location evidence="2">Cytoplasmic vesicle</location>
        <location evidence="2">Secretory vesicle membrane</location>
    </subcellularLocation>
</comment>
<comment type="tissue specificity">
    <text evidence="7">Expressed in vascular cells (at protein level).</text>
</comment>
<comment type="similarity">
    <text evidence="8">Belongs to the TMEM184 family.</text>
</comment>
<comment type="sequence caution" evidence="8">
    <conflict type="miscellaneous discrepancy">
        <sequence resource="EMBL-CDS" id="BAC86522"/>
    </conflict>
    <text>Probable cloning artifact. Aberrant splice sites.</text>
</comment>
<dbReference type="EMBL" id="AK126312">
    <property type="protein sequence ID" value="BAC86522.2"/>
    <property type="status" value="ALT_SEQ"/>
    <property type="molecule type" value="mRNA"/>
</dbReference>
<dbReference type="EMBL" id="AK172850">
    <property type="protein sequence ID" value="BAD18814.1"/>
    <property type="molecule type" value="mRNA"/>
</dbReference>
<dbReference type="EMBL" id="CH471144">
    <property type="protein sequence ID" value="EAW87210.1"/>
    <property type="molecule type" value="Genomic_DNA"/>
</dbReference>
<dbReference type="EMBL" id="BC026694">
    <property type="protein sequence ID" value="AAH26694.1"/>
    <property type="molecule type" value="mRNA"/>
</dbReference>
<dbReference type="CCDS" id="CCDS43537.1"/>
<dbReference type="RefSeq" id="NP_001091089.1">
    <property type="nucleotide sequence ID" value="NM_001097620.2"/>
</dbReference>
<dbReference type="SMR" id="Q6ZMB5"/>
<dbReference type="BioGRID" id="128441">
    <property type="interactions" value="117"/>
</dbReference>
<dbReference type="FunCoup" id="Q6ZMB5">
    <property type="interactions" value="900"/>
</dbReference>
<dbReference type="IntAct" id="Q6ZMB5">
    <property type="interactions" value="94"/>
</dbReference>
<dbReference type="STRING" id="9606.ENSP00000297477"/>
<dbReference type="TCDB" id="2.A.82.1.9">
    <property type="family name" value="the organic solute transporter (ost) family"/>
</dbReference>
<dbReference type="iPTMnet" id="Q6ZMB5"/>
<dbReference type="PhosphoSitePlus" id="Q6ZMB5"/>
<dbReference type="SwissPalm" id="Q6ZMB5"/>
<dbReference type="BioMuta" id="TMEM184A"/>
<dbReference type="DMDM" id="74710509"/>
<dbReference type="jPOST" id="Q6ZMB5"/>
<dbReference type="MassIVE" id="Q6ZMB5"/>
<dbReference type="PaxDb" id="9606-ENSP00000297477"/>
<dbReference type="PeptideAtlas" id="Q6ZMB5"/>
<dbReference type="ProteomicsDB" id="67863"/>
<dbReference type="Antibodypedia" id="10987">
    <property type="antibodies" value="80 antibodies from 24 providers"/>
</dbReference>
<dbReference type="DNASU" id="202915"/>
<dbReference type="Ensembl" id="ENST00000297477.10">
    <property type="protein sequence ID" value="ENSP00000297477.4"/>
    <property type="gene ID" value="ENSG00000164855.16"/>
</dbReference>
<dbReference type="GeneID" id="202915"/>
<dbReference type="KEGG" id="hsa:202915"/>
<dbReference type="MANE-Select" id="ENST00000297477.10">
    <property type="protein sequence ID" value="ENSP00000297477.4"/>
    <property type="RefSeq nucleotide sequence ID" value="NM_001097620.2"/>
    <property type="RefSeq protein sequence ID" value="NP_001091089.1"/>
</dbReference>
<dbReference type="UCSC" id="uc003skv.4">
    <property type="organism name" value="human"/>
</dbReference>
<dbReference type="AGR" id="HGNC:28797"/>
<dbReference type="CTD" id="202915"/>
<dbReference type="DisGeNET" id="202915"/>
<dbReference type="GeneCards" id="TMEM184A"/>
<dbReference type="HGNC" id="HGNC:28797">
    <property type="gene designation" value="TMEM184A"/>
</dbReference>
<dbReference type="HPA" id="ENSG00000164855">
    <property type="expression patterns" value="Tissue enhanced (esophagus)"/>
</dbReference>
<dbReference type="neXtProt" id="NX_Q6ZMB5"/>
<dbReference type="OpenTargets" id="ENSG00000164855"/>
<dbReference type="PharmGKB" id="PA162406118"/>
<dbReference type="VEuPathDB" id="HostDB:ENSG00000164855"/>
<dbReference type="eggNOG" id="KOG2641">
    <property type="taxonomic scope" value="Eukaryota"/>
</dbReference>
<dbReference type="GeneTree" id="ENSGT00940000153861"/>
<dbReference type="HOGENOM" id="CLU_012923_3_0_1"/>
<dbReference type="InParanoid" id="Q6ZMB5"/>
<dbReference type="OMA" id="CEQRYII"/>
<dbReference type="OrthoDB" id="5348404at2759"/>
<dbReference type="PAN-GO" id="Q6ZMB5">
    <property type="GO annotations" value="4 GO annotations based on evolutionary models"/>
</dbReference>
<dbReference type="PhylomeDB" id="Q6ZMB5"/>
<dbReference type="TreeFam" id="TF314160"/>
<dbReference type="PathwayCommons" id="Q6ZMB5"/>
<dbReference type="SignaLink" id="Q6ZMB5"/>
<dbReference type="BioGRID-ORCS" id="202915">
    <property type="hits" value="164 hits in 1140 CRISPR screens"/>
</dbReference>
<dbReference type="ChiTaRS" id="TMEM184A">
    <property type="organism name" value="human"/>
</dbReference>
<dbReference type="GenomeRNAi" id="202915"/>
<dbReference type="Pharos" id="Q6ZMB5">
    <property type="development level" value="Tbio"/>
</dbReference>
<dbReference type="PRO" id="PR:Q6ZMB5"/>
<dbReference type="Proteomes" id="UP000005640">
    <property type="component" value="Chromosome 7"/>
</dbReference>
<dbReference type="RNAct" id="Q6ZMB5">
    <property type="molecule type" value="protein"/>
</dbReference>
<dbReference type="Bgee" id="ENSG00000164855">
    <property type="expression patterns" value="Expressed in lower esophagus mucosa and 171 other cell types or tissues"/>
</dbReference>
<dbReference type="ExpressionAtlas" id="Q6ZMB5">
    <property type="expression patterns" value="baseline and differential"/>
</dbReference>
<dbReference type="GO" id="GO:0030659">
    <property type="term" value="C:cytoplasmic vesicle membrane"/>
    <property type="evidence" value="ECO:0000250"/>
    <property type="project" value="UniProtKB"/>
</dbReference>
<dbReference type="GO" id="GO:0031901">
    <property type="term" value="C:early endosome membrane"/>
    <property type="evidence" value="ECO:0000250"/>
    <property type="project" value="UniProtKB"/>
</dbReference>
<dbReference type="GO" id="GO:0005768">
    <property type="term" value="C:endosome"/>
    <property type="evidence" value="ECO:0000250"/>
    <property type="project" value="UniProtKB"/>
</dbReference>
<dbReference type="GO" id="GO:0048471">
    <property type="term" value="C:perinuclear region of cytoplasm"/>
    <property type="evidence" value="ECO:0000250"/>
    <property type="project" value="UniProtKB"/>
</dbReference>
<dbReference type="GO" id="GO:0005886">
    <property type="term" value="C:plasma membrane"/>
    <property type="evidence" value="ECO:0000250"/>
    <property type="project" value="UniProtKB"/>
</dbReference>
<dbReference type="GO" id="GO:0030667">
    <property type="term" value="C:secretory granule membrane"/>
    <property type="evidence" value="ECO:0000250"/>
    <property type="project" value="UniProtKB"/>
</dbReference>
<dbReference type="GO" id="GO:0030658">
    <property type="term" value="C:transport vesicle membrane"/>
    <property type="evidence" value="ECO:0007669"/>
    <property type="project" value="UniProtKB-SubCell"/>
</dbReference>
<dbReference type="GO" id="GO:0008201">
    <property type="term" value="F:heparin binding"/>
    <property type="evidence" value="ECO:0000250"/>
    <property type="project" value="UniProtKB"/>
</dbReference>
<dbReference type="GO" id="GO:0022857">
    <property type="term" value="F:transmembrane transporter activity"/>
    <property type="evidence" value="ECO:0000318"/>
    <property type="project" value="GO_Central"/>
</dbReference>
<dbReference type="InterPro" id="IPR005178">
    <property type="entry name" value="Ostalpha/TMEM184C"/>
</dbReference>
<dbReference type="PANTHER" id="PTHR23423">
    <property type="entry name" value="ORGANIC SOLUTE TRANSPORTER-RELATED"/>
    <property type="match status" value="1"/>
</dbReference>
<dbReference type="Pfam" id="PF03619">
    <property type="entry name" value="Solute_trans_a"/>
    <property type="match status" value="1"/>
</dbReference>
<dbReference type="SMART" id="SM01417">
    <property type="entry name" value="Solute_trans_a"/>
    <property type="match status" value="1"/>
</dbReference>
<accession>Q6ZMB5</accession>
<accession>Q8TBQ6</accession>
<gene>
    <name type="primary">TMEM184A</name>
</gene>
<organism>
    <name type="scientific">Homo sapiens</name>
    <name type="common">Human</name>
    <dbReference type="NCBI Taxonomy" id="9606"/>
    <lineage>
        <taxon>Eukaryota</taxon>
        <taxon>Metazoa</taxon>
        <taxon>Chordata</taxon>
        <taxon>Craniata</taxon>
        <taxon>Vertebrata</taxon>
        <taxon>Euteleostomi</taxon>
        <taxon>Mammalia</taxon>
        <taxon>Eutheria</taxon>
        <taxon>Euarchontoglires</taxon>
        <taxon>Primates</taxon>
        <taxon>Haplorrhini</taxon>
        <taxon>Catarrhini</taxon>
        <taxon>Hominidae</taxon>
        <taxon>Homo</taxon>
    </lineage>
</organism>
<evidence type="ECO:0000250" key="1">
    <source>
        <dbReference type="UniProtKB" id="Q1RMW2"/>
    </source>
</evidence>
<evidence type="ECO:0000250" key="2">
    <source>
        <dbReference type="UniProtKB" id="Q3UFJ6"/>
    </source>
</evidence>
<evidence type="ECO:0000250" key="3">
    <source>
        <dbReference type="UniProtKB" id="Q4QQS1"/>
    </source>
</evidence>
<evidence type="ECO:0000255" key="4"/>
<evidence type="ECO:0000256" key="5">
    <source>
        <dbReference type="SAM" id="MobiDB-lite"/>
    </source>
</evidence>
<evidence type="ECO:0000269" key="6">
    <source>
    </source>
</evidence>
<evidence type="ECO:0000269" key="7">
    <source>
    </source>
</evidence>
<evidence type="ECO:0000305" key="8"/>
<name>T184A_HUMAN</name>
<protein>
    <recommendedName>
        <fullName>Transmembrane protein 184A</fullName>
    </recommendedName>
</protein>